<protein>
    <recommendedName>
        <fullName evidence="6">DNA polymerase delta catalytic subunit</fullName>
        <ecNumber evidence="3">2.7.7.7</ecNumber>
    </recommendedName>
    <alternativeName>
        <fullName evidence="6">3'-5' exodeoxyribonuclease</fullName>
        <ecNumber evidence="3">3.1.11.-</ecNumber>
    </alternativeName>
</protein>
<keyword id="KW-0004">4Fe-4S</keyword>
<keyword id="KW-0227">DNA damage</keyword>
<keyword id="KW-0228">DNA excision</keyword>
<keyword id="KW-0234">DNA repair</keyword>
<keyword id="KW-0235">DNA replication</keyword>
<keyword id="KW-0238">DNA-binding</keyword>
<keyword id="KW-0239">DNA-directed DNA polymerase</keyword>
<keyword id="KW-0269">Exonuclease</keyword>
<keyword id="KW-0378">Hydrolase</keyword>
<keyword id="KW-0408">Iron</keyword>
<keyword id="KW-0411">Iron-sulfur</keyword>
<keyword id="KW-1017">Isopeptide bond</keyword>
<keyword id="KW-0479">Metal-binding</keyword>
<keyword id="KW-0488">Methylation</keyword>
<keyword id="KW-0540">Nuclease</keyword>
<keyword id="KW-0548">Nucleotidyltransferase</keyword>
<keyword id="KW-0539">Nucleus</keyword>
<keyword id="KW-1185">Reference proteome</keyword>
<keyword id="KW-0808">Transferase</keyword>
<keyword id="KW-0832">Ubl conjugation</keyword>
<keyword id="KW-0862">Zinc</keyword>
<keyword id="KW-0863">Zinc-finger</keyword>
<proteinExistence type="evidence at transcript level"/>
<name>DPOD1_MESAU</name>
<reference key="1">
    <citation type="submission" date="1997-01" db="EMBL/GenBank/DDBJ databases">
        <authorList>
            <person name="Liu Z."/>
            <person name="Mishra N.C."/>
        </authorList>
    </citation>
    <scope>NUCLEOTIDE SEQUENCE [MRNA]</scope>
</reference>
<comment type="function">
    <text evidence="3">As the catalytic component of the trimeric (Pol-delta3 complex) and tetrameric DNA polymerase delta complexes (Pol-delta4 complex), plays a crucial role in high fidelity genome replication, including in lagging strand synthesis, and repair. Exhibits both DNA polymerase and 3'- to 5'-exonuclease activities. Requires the presence of accessory proteins POLD2, POLD3 and POLD4 for full activity. Depending upon the absence (Pol-delta3) or the presence of POLD4 (Pol-delta4), displays differences in catalytic activity. Most notably, expresses higher proofreading activity in the context of Pol-delta3 compared with that of Pol-delta4. Although both Pol-delta3 and Pol-delta4 process Okazaki fragments in vitro, Pol-delta3 may be better suited to fulfill this task, exhibiting near-absence of strand displacement activity compared to Pol-delta4 and stalling on encounter with the 5'-blocking oligonucleotides. Pol-delta3 idling process may avoid the formation of a gap, while maintaining a nick that can be readily ligated. Along with DNA polymerase kappa, DNA polymerase delta carries out approximately half of nucleotide excision repair (NER) synthesis following UV irradiation. Under conditions of DNA replication stress, in the presence of POLD3 and POLD4, may catalyze the repair of broken replication forks through break-induced replication (BIR). Involved in the translesion synthesis (TLS) of templates carrying O6-methylguanine, 8oxoG or abasic sites.</text>
</comment>
<comment type="catalytic activity">
    <reaction evidence="3">
        <text>DNA(n) + a 2'-deoxyribonucleoside 5'-triphosphate = DNA(n+1) + diphosphate</text>
        <dbReference type="Rhea" id="RHEA:22508"/>
        <dbReference type="Rhea" id="RHEA-COMP:17339"/>
        <dbReference type="Rhea" id="RHEA-COMP:17340"/>
        <dbReference type="ChEBI" id="CHEBI:33019"/>
        <dbReference type="ChEBI" id="CHEBI:61560"/>
        <dbReference type="ChEBI" id="CHEBI:173112"/>
        <dbReference type="EC" id="2.7.7.7"/>
    </reaction>
</comment>
<comment type="cofactor">
    <cofactor evidence="1">
        <name>[4Fe-4S] cluster</name>
        <dbReference type="ChEBI" id="CHEBI:49883"/>
    </cofactor>
    <text evidence="1">Binds 1 [4Fe-4S] cluster.</text>
</comment>
<comment type="activity regulation">
    <text evidence="2 3">Regulated by alteration of quaternary structure. Exhibits burst rates of DNA synthesis are about 5 times faster in the presence of POLD4 (Pol-delta4 complex) than in its absence (Pol-delta3 complex), while the affinity of the enzyme for its DNA and dNTP substrates appears unchanged. The Pol-delta3 complex is more likely to proofread DNA synthesis because it cleaves single-stranded DNA twice as fast and transfers mismatched DNA from the polymerase to the exonuclease sites 9 times faster compared to the Pol-delta3 complex. Pol-delta3 also extends mismatched primers 3 times more slowly in the absence of POLD4. The conversion of Pol-delta4 into Pol-delta3 is induced by genotoxic stress or by replication stress leading POLD4 degradation. Stimulated in the presence of PCNA (By similarity). This stimulation is further increased in the presence of KCTD13/PDIP1, most probably via direct interaction between KCTD13 and POLD2 (By similarity).</text>
</comment>
<comment type="subunit">
    <text evidence="3">Component of the tetrameric DNA polymerase delta complex (Pol-delta4), which consists of POLD1/p125, POLD2/p50, POLD3/p66/p68 and POLD4/p12, with POLD1 bearing both DNA polymerase and 3' to 5' proofreading exonuclease activities. Within Pol-delta4, directly interacts with POLD2 and POLD4. Following genotoxic stress by DNA-damaging agents, such as ultraviolet light and methyl methanesulfonate, or by replication stress induced by treatment with hydroxyurea or aphidicolin, Pol-delta4 is converted into a trimeric form of the complex (Pol-delta3) by POLD4 degradation. Pol-delta3 is the major form at S phase replication sites and DNA damage sites. POLD1 displays different catalytic properties depending upon the complex it is found in. It exhibits higher proofreading activity and fidelity than Pol-delta4, making it particularly well suited to respond to DNA damage. Directly interacts with PCNA, as do POLD3 and POLD4; this interaction stimulates Pol-delta4 polymerase activity. As POLD2 and POLD4, directly interacts with WRNIP1; this interaction stimulates DNA polymerase delta-mediated DNA synthesis, independently of the presence of PCNA. This stimulation may be due predominantly to an increase of initiation frequency and also to increased processivity. Also observed as a dimeric complex with POLD2 (Pol-delta2). Pol-delta2 is relatively insensitive to the PCNA stimulation (2-5-fold) compared to Pol-delta4 that is stimulated by over 50-fold. The DNA polymerase delta complex interacts with POLDIP2; this interaction is probably mediated through direct binding to POLD2. Interacts with CIAO1. Interacts with POLDIP2 (By similarity). Interacts with RFC1 (By similarity).</text>
</comment>
<comment type="subcellular location">
    <subcellularLocation>
        <location evidence="3">Nucleus</location>
    </subcellularLocation>
    <text evidence="3">Colocalizes with PCNA and POLD3 at S phase replication sites. After UV irradiation, recruited to DNA damage sites within 2 hours, independently on the cell cycle phase, nor on PCNA ubiquitination. This recruitment requires POLD3, PCNA and RFC1-replication factor C complex.</text>
</comment>
<comment type="domain">
    <text evidence="1">The CysB motif binds 1 4Fe-4S cluster and is required for the formation of polymerase complexes.</text>
</comment>
<comment type="miscellaneous">
    <text>In eukaryotes there are five DNA polymerases: alpha, beta, gamma, delta, and epsilon which are responsible for different reactions of DNA synthesis.</text>
</comment>
<comment type="similarity">
    <text evidence="6">Belongs to the DNA polymerase type-B family.</text>
</comment>
<dbReference type="EC" id="2.7.7.7" evidence="3"/>
<dbReference type="EC" id="3.1.11.-" evidence="3"/>
<dbReference type="EMBL" id="U83704">
    <property type="protein sequence ID" value="AAB47254.1"/>
    <property type="molecule type" value="mRNA"/>
</dbReference>
<dbReference type="EMBL" id="U83705">
    <property type="protein sequence ID" value="AAB47255.1"/>
    <property type="molecule type" value="mRNA"/>
</dbReference>
<dbReference type="SMR" id="P97283"/>
<dbReference type="STRING" id="10036.ENSMAUP00000003562"/>
<dbReference type="eggNOG" id="KOG0969">
    <property type="taxonomic scope" value="Eukaryota"/>
</dbReference>
<dbReference type="Proteomes" id="UP000189706">
    <property type="component" value="Unplaced"/>
</dbReference>
<dbReference type="GO" id="GO:0043625">
    <property type="term" value="C:delta DNA polymerase complex"/>
    <property type="evidence" value="ECO:0007669"/>
    <property type="project" value="TreeGrafter"/>
</dbReference>
<dbReference type="GO" id="GO:0008296">
    <property type="term" value="F:3'-5'-DNA exonuclease activity"/>
    <property type="evidence" value="ECO:0007669"/>
    <property type="project" value="TreeGrafter"/>
</dbReference>
<dbReference type="GO" id="GO:0051539">
    <property type="term" value="F:4 iron, 4 sulfur cluster binding"/>
    <property type="evidence" value="ECO:0007669"/>
    <property type="project" value="UniProtKB-KW"/>
</dbReference>
<dbReference type="GO" id="GO:0003682">
    <property type="term" value="F:chromatin binding"/>
    <property type="evidence" value="ECO:0000250"/>
    <property type="project" value="UniProtKB"/>
</dbReference>
<dbReference type="GO" id="GO:0003684">
    <property type="term" value="F:damaged DNA binding"/>
    <property type="evidence" value="ECO:0000250"/>
    <property type="project" value="UniProtKB"/>
</dbReference>
<dbReference type="GO" id="GO:0003887">
    <property type="term" value="F:DNA-directed DNA polymerase activity"/>
    <property type="evidence" value="ECO:0007669"/>
    <property type="project" value="UniProtKB-KW"/>
</dbReference>
<dbReference type="GO" id="GO:0000166">
    <property type="term" value="F:nucleotide binding"/>
    <property type="evidence" value="ECO:0007669"/>
    <property type="project" value="InterPro"/>
</dbReference>
<dbReference type="GO" id="GO:0008270">
    <property type="term" value="F:zinc ion binding"/>
    <property type="evidence" value="ECO:0007669"/>
    <property type="project" value="UniProtKB-KW"/>
</dbReference>
<dbReference type="GO" id="GO:0006287">
    <property type="term" value="P:base-excision repair, gap-filling"/>
    <property type="evidence" value="ECO:0007669"/>
    <property type="project" value="TreeGrafter"/>
</dbReference>
<dbReference type="GO" id="GO:0034644">
    <property type="term" value="P:cellular response to UV"/>
    <property type="evidence" value="ECO:0000250"/>
    <property type="project" value="UniProtKB"/>
</dbReference>
<dbReference type="GO" id="GO:0045004">
    <property type="term" value="P:DNA replication proofreading"/>
    <property type="evidence" value="ECO:0007669"/>
    <property type="project" value="TreeGrafter"/>
</dbReference>
<dbReference type="GO" id="GO:0000731">
    <property type="term" value="P:DNA synthesis involved in DNA repair"/>
    <property type="evidence" value="ECO:0000250"/>
    <property type="project" value="UniProtKB"/>
</dbReference>
<dbReference type="GO" id="GO:0070987">
    <property type="term" value="P:error-free translesion synthesis"/>
    <property type="evidence" value="ECO:0000250"/>
    <property type="project" value="UniProtKB"/>
</dbReference>
<dbReference type="GO" id="GO:0055089">
    <property type="term" value="P:fatty acid homeostasis"/>
    <property type="evidence" value="ECO:0000250"/>
    <property type="project" value="UniProtKB"/>
</dbReference>
<dbReference type="GO" id="GO:0006297">
    <property type="term" value="P:nucleotide-excision repair, DNA gap filling"/>
    <property type="evidence" value="ECO:0007669"/>
    <property type="project" value="TreeGrafter"/>
</dbReference>
<dbReference type="CDD" id="cd05777">
    <property type="entry name" value="DNA_polB_delta_exo"/>
    <property type="match status" value="1"/>
</dbReference>
<dbReference type="CDD" id="cd05533">
    <property type="entry name" value="POLBc_delta"/>
    <property type="match status" value="1"/>
</dbReference>
<dbReference type="FunFam" id="1.10.132.60:FF:000001">
    <property type="entry name" value="DNA polymerase"/>
    <property type="match status" value="1"/>
</dbReference>
<dbReference type="FunFam" id="1.10.287.690:FF:000001">
    <property type="entry name" value="DNA polymerase"/>
    <property type="match status" value="1"/>
</dbReference>
<dbReference type="FunFam" id="3.30.342.10:FF:000003">
    <property type="entry name" value="DNA polymerase"/>
    <property type="match status" value="1"/>
</dbReference>
<dbReference type="FunFam" id="3.30.420.10:FF:000351">
    <property type="entry name" value="DNA polymerase"/>
    <property type="match status" value="1"/>
</dbReference>
<dbReference type="FunFam" id="3.90.1600.10:FF:000029">
    <property type="entry name" value="DNA polymerase"/>
    <property type="match status" value="1"/>
</dbReference>
<dbReference type="Gene3D" id="6.10.140.1540">
    <property type="match status" value="1"/>
</dbReference>
<dbReference type="Gene3D" id="1.10.132.60">
    <property type="entry name" value="DNA polymerase family B, C-terminal domain"/>
    <property type="match status" value="1"/>
</dbReference>
<dbReference type="Gene3D" id="3.30.342.10">
    <property type="entry name" value="DNA Polymerase, chain B, domain 1"/>
    <property type="match status" value="1"/>
</dbReference>
<dbReference type="Gene3D" id="1.10.287.690">
    <property type="entry name" value="Helix hairpin bin"/>
    <property type="match status" value="1"/>
</dbReference>
<dbReference type="Gene3D" id="3.90.1600.10">
    <property type="entry name" value="Palm domain of DNA polymerase"/>
    <property type="match status" value="2"/>
</dbReference>
<dbReference type="Gene3D" id="3.30.420.10">
    <property type="entry name" value="Ribonuclease H-like superfamily/Ribonuclease H"/>
    <property type="match status" value="1"/>
</dbReference>
<dbReference type="InterPro" id="IPR006172">
    <property type="entry name" value="DNA-dir_DNA_pol_B"/>
</dbReference>
<dbReference type="InterPro" id="IPR017964">
    <property type="entry name" value="DNA-dir_DNA_pol_B_CS"/>
</dbReference>
<dbReference type="InterPro" id="IPR006133">
    <property type="entry name" value="DNA-dir_DNA_pol_B_exonuc"/>
</dbReference>
<dbReference type="InterPro" id="IPR006134">
    <property type="entry name" value="DNA-dir_DNA_pol_B_multi_dom"/>
</dbReference>
<dbReference type="InterPro" id="IPR043502">
    <property type="entry name" value="DNA/RNA_pol_sf"/>
</dbReference>
<dbReference type="InterPro" id="IPR042087">
    <property type="entry name" value="DNA_pol_B_thumb"/>
</dbReference>
<dbReference type="InterPro" id="IPR023211">
    <property type="entry name" value="DNA_pol_palm_dom_sf"/>
</dbReference>
<dbReference type="InterPro" id="IPR050240">
    <property type="entry name" value="DNA_pol_type-B"/>
</dbReference>
<dbReference type="InterPro" id="IPR056435">
    <property type="entry name" value="DPOD/Z_N"/>
</dbReference>
<dbReference type="InterPro" id="IPR012337">
    <property type="entry name" value="RNaseH-like_sf"/>
</dbReference>
<dbReference type="InterPro" id="IPR036397">
    <property type="entry name" value="RNaseH_sf"/>
</dbReference>
<dbReference type="InterPro" id="IPR025687">
    <property type="entry name" value="Znf-C4pol"/>
</dbReference>
<dbReference type="NCBIfam" id="TIGR00592">
    <property type="entry name" value="pol2"/>
    <property type="match status" value="1"/>
</dbReference>
<dbReference type="PANTHER" id="PTHR10322">
    <property type="entry name" value="DNA POLYMERASE CATALYTIC SUBUNIT"/>
    <property type="match status" value="1"/>
</dbReference>
<dbReference type="PANTHER" id="PTHR10322:SF23">
    <property type="entry name" value="DNA POLYMERASE DELTA CATALYTIC SUBUNIT"/>
    <property type="match status" value="1"/>
</dbReference>
<dbReference type="Pfam" id="PF00136">
    <property type="entry name" value="DNA_pol_B"/>
    <property type="match status" value="1"/>
</dbReference>
<dbReference type="Pfam" id="PF03104">
    <property type="entry name" value="DNA_pol_B_exo1"/>
    <property type="match status" value="1"/>
</dbReference>
<dbReference type="Pfam" id="PF24055">
    <property type="entry name" value="POL3_N"/>
    <property type="match status" value="1"/>
</dbReference>
<dbReference type="Pfam" id="PF14260">
    <property type="entry name" value="zf-C4pol"/>
    <property type="match status" value="1"/>
</dbReference>
<dbReference type="PRINTS" id="PR00106">
    <property type="entry name" value="DNAPOLB"/>
</dbReference>
<dbReference type="SMART" id="SM00486">
    <property type="entry name" value="POLBc"/>
    <property type="match status" value="1"/>
</dbReference>
<dbReference type="SUPFAM" id="SSF56672">
    <property type="entry name" value="DNA/RNA polymerases"/>
    <property type="match status" value="1"/>
</dbReference>
<dbReference type="SUPFAM" id="SSF53098">
    <property type="entry name" value="Ribonuclease H-like"/>
    <property type="match status" value="1"/>
</dbReference>
<dbReference type="PROSITE" id="PS00116">
    <property type="entry name" value="DNA_POLYMERASE_B"/>
    <property type="match status" value="1"/>
</dbReference>
<evidence type="ECO:0000250" key="1"/>
<evidence type="ECO:0000250" key="2">
    <source>
        <dbReference type="UniProtKB" id="P28339"/>
    </source>
</evidence>
<evidence type="ECO:0000250" key="3">
    <source>
        <dbReference type="UniProtKB" id="P28340"/>
    </source>
</evidence>
<evidence type="ECO:0000255" key="4"/>
<evidence type="ECO:0000256" key="5">
    <source>
        <dbReference type="SAM" id="MobiDB-lite"/>
    </source>
</evidence>
<evidence type="ECO:0000305" key="6"/>
<organism>
    <name type="scientific">Mesocricetus auratus</name>
    <name type="common">Golden hamster</name>
    <dbReference type="NCBI Taxonomy" id="10036"/>
    <lineage>
        <taxon>Eukaryota</taxon>
        <taxon>Metazoa</taxon>
        <taxon>Chordata</taxon>
        <taxon>Craniata</taxon>
        <taxon>Vertebrata</taxon>
        <taxon>Euteleostomi</taxon>
        <taxon>Mammalia</taxon>
        <taxon>Eutheria</taxon>
        <taxon>Euarchontoglires</taxon>
        <taxon>Glires</taxon>
        <taxon>Rodentia</taxon>
        <taxon>Myomorpha</taxon>
        <taxon>Muroidea</taxon>
        <taxon>Cricetidae</taxon>
        <taxon>Cricetinae</taxon>
        <taxon>Mesocricetus</taxon>
    </lineage>
</organism>
<sequence length="1103" mass="123466">MDFKRRQGPGPGVPPKRARGGLWDEDEPSQFEENLALLEEIEAENRLQEAEEELQLPPQGPAGGQFSTADIDPRWKRPALCALDPNTEPLIFQQLEIDHYVGSAVPLPGGPPTSCNSVPILRAFGVTDEGFSVCCHIHGFAPYFYTPAPPGFGAEHLSDLQRELSTAISRDQRGGKELSGPAVLAIELCSRESMFGYHGHGPSPFLRITLALPRLVAPARRLLEQGIRVPGLGTPSFAPYEANVDFEIRFMVDADIVGCNWLELPAGKYVWRTEKKATQCQLEVDVLWSDVISHPPEGQWQRIAPLRVLSFDIECAGRKGIFPEPERDPVIQICSLGLRWGEPEPFLRLALTLRPCAPILGAKVQSYEREEDLLQAWPNFILAMDPDVITGYNIQNFDLPYLISRAQTLKVDRFPFLGRVTGLRSNIRDSSFQSRQVGRRDSKVVSMVGRVQMDMLQVLLREHKLRSYTLNAVSFHFLGEQKEDVQHSIITDLQNGNEQTRRRLAVYCLRDAFLPLRLLERLMVLVNNVEMARVTGVPLGYLLSRGQQVKVVSQLLRQAMRQGLLMPVVKTEGGEDYTGATVIEPLKGYYDVPIATLDFSSLYPSIMMAHNLCYTTLLRPGAAQKLGLKPDEFIKTPTGDEFVKSSVRKGLLPQILENLLSARKRAKAELAQETDPLRRQVLDGRQLALKVSANSVYGFTGAEVGKLPCLEISQSVTGFGRQMIEKTKQLVESKYTLENGYNANAKVVYGDTDSVMCRFGVSSVAEAMSLGREAANWVSSHFPSPIRLEFEKVYFPYLLISKKRYAGLLFSSQPDTHDRMDCKGLEAVRRDNCPLVANLVTSSLRRILVDRDPDGAVAHAKDVISDLLCNRIDISQLVITKELTRAAADYAGKQAHVELAERMRKRDPGSAPSLGDRVPYVIIGAAKGVAAYMKSEDPLFVLEHSLPIDTQYYLGQQLAKPLLRIFEPILGEGRAESVLLRGDHTRCKTVLTSKVGGLLAFTKRRNCCIGCRSVINHQGAVCEFCQPRESELYQKEVSHLNALEERFSRLWTQCQRCQGSLHEDVICTSRDCPIFYMRKKVRKDLEDQERLLQRFGPPGPEAW</sequence>
<feature type="chain" id="PRO_0000046443" description="DNA polymerase delta catalytic subunit">
    <location>
        <begin position="1"/>
        <end position="1103"/>
    </location>
</feature>
<feature type="zinc finger region" description="CysA-type">
    <location>
        <begin position="1008"/>
        <end position="1025"/>
    </location>
</feature>
<feature type="region of interest" description="Disordered" evidence="5">
    <location>
        <begin position="1"/>
        <end position="29"/>
    </location>
</feature>
<feature type="short sequence motif" description="Nuclear localization signal" evidence="4">
    <location>
        <begin position="4"/>
        <end position="19"/>
    </location>
</feature>
<feature type="short sequence motif" description="CysB motif">
    <location>
        <begin position="1054"/>
        <end position="1072"/>
    </location>
</feature>
<feature type="binding site" evidence="1">
    <location>
        <position position="1008"/>
    </location>
    <ligand>
        <name>Zn(2+)</name>
        <dbReference type="ChEBI" id="CHEBI:29105"/>
    </ligand>
</feature>
<feature type="binding site" evidence="1">
    <location>
        <position position="1011"/>
    </location>
    <ligand>
        <name>Zn(2+)</name>
        <dbReference type="ChEBI" id="CHEBI:29105"/>
    </ligand>
</feature>
<feature type="binding site" evidence="1">
    <location>
        <position position="1022"/>
    </location>
    <ligand>
        <name>Zn(2+)</name>
        <dbReference type="ChEBI" id="CHEBI:29105"/>
    </ligand>
</feature>
<feature type="binding site" evidence="1">
    <location>
        <position position="1025"/>
    </location>
    <ligand>
        <name>Zn(2+)</name>
        <dbReference type="ChEBI" id="CHEBI:29105"/>
    </ligand>
</feature>
<feature type="binding site" evidence="1">
    <location>
        <position position="1054"/>
    </location>
    <ligand>
        <name>[4Fe-4S] cluster</name>
        <dbReference type="ChEBI" id="CHEBI:49883"/>
    </ligand>
</feature>
<feature type="binding site" evidence="1">
    <location>
        <position position="1057"/>
    </location>
    <ligand>
        <name>[4Fe-4S] cluster</name>
        <dbReference type="ChEBI" id="CHEBI:49883"/>
    </ligand>
</feature>
<feature type="binding site" evidence="1">
    <location>
        <position position="1067"/>
    </location>
    <ligand>
        <name>[4Fe-4S] cluster</name>
        <dbReference type="ChEBI" id="CHEBI:49883"/>
    </ligand>
</feature>
<feature type="binding site" evidence="1">
    <location>
        <position position="1072"/>
    </location>
    <ligand>
        <name>[4Fe-4S] cluster</name>
        <dbReference type="ChEBI" id="CHEBI:49883"/>
    </ligand>
</feature>
<feature type="modified residue" description="Omega-N-methylarginine" evidence="3">
    <location>
        <position position="19"/>
    </location>
</feature>
<feature type="cross-link" description="Glycyl lysine isopeptide (Lys-Gly) (interchain with G-Cter in SUMO2)" evidence="3">
    <location>
        <position position="570"/>
    </location>
</feature>
<feature type="sequence variant" description="In delta'.">
    <location>
        <position position="64"/>
    </location>
</feature>
<feature type="sequence variant" description="In delta'.">
    <original>P</original>
    <variation>S</variation>
    <location>
        <position position="386"/>
    </location>
</feature>
<accession>P97283</accession>
<accession>P97284</accession>
<gene>
    <name type="primary">POLD1</name>
</gene>